<evidence type="ECO:0000250" key="1">
    <source>
        <dbReference type="UniProtKB" id="Q7Z4G4"/>
    </source>
</evidence>
<evidence type="ECO:0000255" key="2">
    <source>
        <dbReference type="PROSITE-ProRule" id="PRU00959"/>
    </source>
</evidence>
<evidence type="ECO:0000256" key="3">
    <source>
        <dbReference type="SAM" id="MobiDB-lite"/>
    </source>
</evidence>
<gene>
    <name type="primary">trmt11</name>
    <name type="ORF">DDB_G0283969</name>
</gene>
<dbReference type="EC" id="2.1.1.214" evidence="1"/>
<dbReference type="EMBL" id="AAFI02000058">
    <property type="protein sequence ID" value="EAL65472.1"/>
    <property type="molecule type" value="Genomic_DNA"/>
</dbReference>
<dbReference type="RefSeq" id="XP_638838.1">
    <property type="nucleotide sequence ID" value="XM_633746.1"/>
</dbReference>
<dbReference type="FunCoup" id="Q54QA6">
    <property type="interactions" value="699"/>
</dbReference>
<dbReference type="STRING" id="44689.Q54QA6"/>
<dbReference type="PaxDb" id="44689-DDB0302468"/>
<dbReference type="EnsemblProtists" id="EAL65472">
    <property type="protein sequence ID" value="EAL65472"/>
    <property type="gene ID" value="DDB_G0283969"/>
</dbReference>
<dbReference type="GeneID" id="8624362"/>
<dbReference type="KEGG" id="ddi:DDB_G0283969"/>
<dbReference type="dictyBase" id="DDB_G0283969">
    <property type="gene designation" value="trmt11"/>
</dbReference>
<dbReference type="VEuPathDB" id="AmoebaDB:DDB_G0283969"/>
<dbReference type="eggNOG" id="KOG2671">
    <property type="taxonomic scope" value="Eukaryota"/>
</dbReference>
<dbReference type="HOGENOM" id="CLU_029646_3_0_1"/>
<dbReference type="InParanoid" id="Q54QA6"/>
<dbReference type="OMA" id="AFNKWSR"/>
<dbReference type="PhylomeDB" id="Q54QA6"/>
<dbReference type="PRO" id="PR:Q54QA6"/>
<dbReference type="Proteomes" id="UP000002195">
    <property type="component" value="Chromosome 4"/>
</dbReference>
<dbReference type="GO" id="GO:0005737">
    <property type="term" value="C:cytoplasm"/>
    <property type="evidence" value="ECO:0000250"/>
    <property type="project" value="UniProtKB"/>
</dbReference>
<dbReference type="GO" id="GO:0043528">
    <property type="term" value="C:tRNA (m2G10) methyltransferase complex"/>
    <property type="evidence" value="ECO:0000250"/>
    <property type="project" value="UniProtKB"/>
</dbReference>
<dbReference type="GO" id="GO:0008168">
    <property type="term" value="F:methyltransferase activity"/>
    <property type="evidence" value="ECO:0000318"/>
    <property type="project" value="GO_Central"/>
</dbReference>
<dbReference type="GO" id="GO:0160102">
    <property type="term" value="F:tRNA (guanine(10)-N2)-methyltransferase activity"/>
    <property type="evidence" value="ECO:0000250"/>
    <property type="project" value="UniProtKB"/>
</dbReference>
<dbReference type="GO" id="GO:0000049">
    <property type="term" value="F:tRNA binding"/>
    <property type="evidence" value="ECO:0007669"/>
    <property type="project" value="UniProtKB-KW"/>
</dbReference>
<dbReference type="GO" id="GO:0032259">
    <property type="term" value="P:methylation"/>
    <property type="evidence" value="ECO:0007669"/>
    <property type="project" value="UniProtKB-KW"/>
</dbReference>
<dbReference type="GO" id="GO:0008033">
    <property type="term" value="P:tRNA processing"/>
    <property type="evidence" value="ECO:0007669"/>
    <property type="project" value="UniProtKB-KW"/>
</dbReference>
<dbReference type="CDD" id="cd02440">
    <property type="entry name" value="AdoMet_MTases"/>
    <property type="match status" value="1"/>
</dbReference>
<dbReference type="Gene3D" id="3.40.50.150">
    <property type="entry name" value="Vaccinia Virus protein VP39"/>
    <property type="match status" value="1"/>
</dbReference>
<dbReference type="InterPro" id="IPR002052">
    <property type="entry name" value="DNA_methylase_N6_adenine_CS"/>
</dbReference>
<dbReference type="InterPro" id="IPR029063">
    <property type="entry name" value="SAM-dependent_MTases_sf"/>
</dbReference>
<dbReference type="InterPro" id="IPR016691">
    <property type="entry name" value="tRNA_mtfrase_TRM11"/>
</dbReference>
<dbReference type="PANTHER" id="PTHR13370">
    <property type="entry name" value="RNA METHYLASE-RELATED"/>
    <property type="match status" value="1"/>
</dbReference>
<dbReference type="PANTHER" id="PTHR13370:SF3">
    <property type="entry name" value="TRNA (GUANINE(10)-N2)-METHYLTRANSFERASE HOMOLOG"/>
    <property type="match status" value="1"/>
</dbReference>
<dbReference type="PIRSF" id="PIRSF017259">
    <property type="entry name" value="tRNA_mtfrase_TRM11"/>
    <property type="match status" value="1"/>
</dbReference>
<dbReference type="PRINTS" id="PR00507">
    <property type="entry name" value="N12N6MTFRASE"/>
</dbReference>
<dbReference type="SUPFAM" id="SSF53335">
    <property type="entry name" value="S-adenosyl-L-methionine-dependent methyltransferases"/>
    <property type="match status" value="1"/>
</dbReference>
<dbReference type="PROSITE" id="PS00092">
    <property type="entry name" value="N6_MTASE"/>
    <property type="match status" value="1"/>
</dbReference>
<dbReference type="PROSITE" id="PS51627">
    <property type="entry name" value="SAM_MT_TRM11"/>
    <property type="match status" value="1"/>
</dbReference>
<organism>
    <name type="scientific">Dictyostelium discoideum</name>
    <name type="common">Social amoeba</name>
    <dbReference type="NCBI Taxonomy" id="44689"/>
    <lineage>
        <taxon>Eukaryota</taxon>
        <taxon>Amoebozoa</taxon>
        <taxon>Evosea</taxon>
        <taxon>Eumycetozoa</taxon>
        <taxon>Dictyostelia</taxon>
        <taxon>Dictyosteliales</taxon>
        <taxon>Dictyosteliaceae</taxon>
        <taxon>Dictyostelium</taxon>
    </lineage>
</organism>
<reference key="1">
    <citation type="journal article" date="2005" name="Nature">
        <title>The genome of the social amoeba Dictyostelium discoideum.</title>
        <authorList>
            <person name="Eichinger L."/>
            <person name="Pachebat J.A."/>
            <person name="Gloeckner G."/>
            <person name="Rajandream M.A."/>
            <person name="Sucgang R."/>
            <person name="Berriman M."/>
            <person name="Song J."/>
            <person name="Olsen R."/>
            <person name="Szafranski K."/>
            <person name="Xu Q."/>
            <person name="Tunggal B."/>
            <person name="Kummerfeld S."/>
            <person name="Madera M."/>
            <person name="Konfortov B.A."/>
            <person name="Rivero F."/>
            <person name="Bankier A.T."/>
            <person name="Lehmann R."/>
            <person name="Hamlin N."/>
            <person name="Davies R."/>
            <person name="Gaudet P."/>
            <person name="Fey P."/>
            <person name="Pilcher K."/>
            <person name="Chen G."/>
            <person name="Saunders D."/>
            <person name="Sodergren E.J."/>
            <person name="Davis P."/>
            <person name="Kerhornou A."/>
            <person name="Nie X."/>
            <person name="Hall N."/>
            <person name="Anjard C."/>
            <person name="Hemphill L."/>
            <person name="Bason N."/>
            <person name="Farbrother P."/>
            <person name="Desany B."/>
            <person name="Just E."/>
            <person name="Morio T."/>
            <person name="Rost R."/>
            <person name="Churcher C.M."/>
            <person name="Cooper J."/>
            <person name="Haydock S."/>
            <person name="van Driessche N."/>
            <person name="Cronin A."/>
            <person name="Goodhead I."/>
            <person name="Muzny D.M."/>
            <person name="Mourier T."/>
            <person name="Pain A."/>
            <person name="Lu M."/>
            <person name="Harper D."/>
            <person name="Lindsay R."/>
            <person name="Hauser H."/>
            <person name="James K.D."/>
            <person name="Quiles M."/>
            <person name="Madan Babu M."/>
            <person name="Saito T."/>
            <person name="Buchrieser C."/>
            <person name="Wardroper A."/>
            <person name="Felder M."/>
            <person name="Thangavelu M."/>
            <person name="Johnson D."/>
            <person name="Knights A."/>
            <person name="Loulseged H."/>
            <person name="Mungall K.L."/>
            <person name="Oliver K."/>
            <person name="Price C."/>
            <person name="Quail M.A."/>
            <person name="Urushihara H."/>
            <person name="Hernandez J."/>
            <person name="Rabbinowitsch E."/>
            <person name="Steffen D."/>
            <person name="Sanders M."/>
            <person name="Ma J."/>
            <person name="Kohara Y."/>
            <person name="Sharp S."/>
            <person name="Simmonds M.N."/>
            <person name="Spiegler S."/>
            <person name="Tivey A."/>
            <person name="Sugano S."/>
            <person name="White B."/>
            <person name="Walker D."/>
            <person name="Woodward J.R."/>
            <person name="Winckler T."/>
            <person name="Tanaka Y."/>
            <person name="Shaulsky G."/>
            <person name="Schleicher M."/>
            <person name="Weinstock G.M."/>
            <person name="Rosenthal A."/>
            <person name="Cox E.C."/>
            <person name="Chisholm R.L."/>
            <person name="Gibbs R.A."/>
            <person name="Loomis W.F."/>
            <person name="Platzer M."/>
            <person name="Kay R.R."/>
            <person name="Williams J.G."/>
            <person name="Dear P.H."/>
            <person name="Noegel A.A."/>
            <person name="Barrell B.G."/>
            <person name="Kuspa A."/>
        </authorList>
    </citation>
    <scope>NUCLEOTIDE SEQUENCE [LARGE SCALE GENOMIC DNA]</scope>
    <source>
        <strain>AX4</strain>
    </source>
</reference>
<feature type="chain" id="PRO_0000328121" description="tRNA (guanine(10)-N(2))-methyltransferase TRMT11">
    <location>
        <begin position="1"/>
        <end position="507"/>
    </location>
</feature>
<feature type="region of interest" description="Disordered" evidence="3">
    <location>
        <begin position="459"/>
        <end position="507"/>
    </location>
</feature>
<feature type="compositionally biased region" description="Basic and acidic residues" evidence="3">
    <location>
        <begin position="459"/>
        <end position="475"/>
    </location>
</feature>
<feature type="compositionally biased region" description="Low complexity" evidence="3">
    <location>
        <begin position="480"/>
        <end position="507"/>
    </location>
</feature>
<comment type="function">
    <text evidence="1">Catalytic subunit of the TRMT11-TRM112 methyltransferase complex, that specifically mediates the S-adenosyl-L-methionine-dependent N(2)-methylation of guanosine nucleotide at position 10 (m2G10) in tRNAs. This is one of the major tRNA (guanine-N(2))-methyltransferases.</text>
</comment>
<comment type="catalytic activity">
    <reaction evidence="1">
        <text>guanosine(10) in tRNA + S-adenosyl-L-methionine = N(2)-methylguanosine(10) in tRNA + S-adenosyl-L-homocysteine + H(+)</text>
        <dbReference type="Rhea" id="RHEA:43128"/>
        <dbReference type="Rhea" id="RHEA-COMP:10355"/>
        <dbReference type="Rhea" id="RHEA-COMP:10357"/>
        <dbReference type="ChEBI" id="CHEBI:15378"/>
        <dbReference type="ChEBI" id="CHEBI:57856"/>
        <dbReference type="ChEBI" id="CHEBI:59789"/>
        <dbReference type="ChEBI" id="CHEBI:74269"/>
        <dbReference type="ChEBI" id="CHEBI:74481"/>
        <dbReference type="EC" id="2.1.1.214"/>
    </reaction>
    <physiologicalReaction direction="left-to-right" evidence="1">
        <dbReference type="Rhea" id="RHEA:43129"/>
    </physiologicalReaction>
</comment>
<comment type="subunit">
    <text evidence="1">Part of the heterodimeric TRMT11-TRM112 methyltransferase complex; this complex forms an active tRNA methyltransferase, where TRMT112 acts as an activator of the catalytic subunit TRMT11.</text>
</comment>
<comment type="subcellular location">
    <subcellularLocation>
        <location evidence="1">Cytoplasm</location>
    </subcellularLocation>
</comment>
<comment type="similarity">
    <text evidence="2">Belongs to the class I-like SAM-binding methyltransferase superfamily. TRM11 methyltransferase family.</text>
</comment>
<keyword id="KW-0963">Cytoplasm</keyword>
<keyword id="KW-0489">Methyltransferase</keyword>
<keyword id="KW-1185">Reference proteome</keyword>
<keyword id="KW-0694">RNA-binding</keyword>
<keyword id="KW-0949">S-adenosyl-L-methionine</keyword>
<keyword id="KW-0808">Transferase</keyword>
<keyword id="KW-0819">tRNA processing</keyword>
<keyword id="KW-0820">tRNA-binding</keyword>
<accession>Q54QA6</accession>
<name>TRM11_DICDI</name>
<protein>
    <recommendedName>
        <fullName evidence="1">tRNA (guanine(10)-N(2))-methyltransferase TRMT11</fullName>
        <ecNumber evidence="1">2.1.1.214</ecNumber>
    </recommendedName>
    <alternativeName>
        <fullName>tRNA guanosine-2'-O-methyltransferase 11</fullName>
    </alternativeName>
</protein>
<sequence>MPKYLINFVQQYASFRIHELESVARLFNIDIQYNKEDLEFIESLDPEIETPFLYVTVNSEEDIKKICTRSVLIKSVYSIWAETQLLDEILNELHSKFDKQFLSNYMINKTFKIEVESYGSKYNQKEKLEMMQKLKDSPLWDSGKCLMHPTEEQMDKHILWYILTDFGVERQGLVKDFTLLPRKVYFGQRIAKGNRDDIIKYNLSDRKYLGTTSMDPELSLVSANMGLVKKGHFVLDPFVGTGSFILVASHFGAQTVGCDIDIKAMRKEEDCNLETNFKDHGLTSQFLGTILCDNSCPPWRVNSMFDSIITDPPYGIRAGARKIGFKENRKFVPVPEGLRRDHIPQCIDYSVPDVMADLLELAAKTLIVGGRLVYWLPTTPDYKETDLPRHPCLRLITASCLQILTNRWGRRLVTMEKIIEYNDSIHNKSLLVQEDLGQFDPQHKDLRAVVFWKKMGTNEKTKKKEQKKKSVENHLKSKNNNDVINNNSNDTNSNNNCNNENNIENQK</sequence>
<proteinExistence type="inferred from homology"/>